<organism>
    <name type="scientific">Dictyostelium discoideum</name>
    <name type="common">Social amoeba</name>
    <dbReference type="NCBI Taxonomy" id="44689"/>
    <lineage>
        <taxon>Eukaryota</taxon>
        <taxon>Amoebozoa</taxon>
        <taxon>Evosea</taxon>
        <taxon>Eumycetozoa</taxon>
        <taxon>Dictyostelia</taxon>
        <taxon>Dictyosteliales</taxon>
        <taxon>Dictyosteliaceae</taxon>
        <taxon>Dictyostelium</taxon>
    </lineage>
</organism>
<reference key="1">
    <citation type="journal article" date="2005" name="Nature">
        <title>The genome of the social amoeba Dictyostelium discoideum.</title>
        <authorList>
            <person name="Eichinger L."/>
            <person name="Pachebat J.A."/>
            <person name="Gloeckner G."/>
            <person name="Rajandream M.A."/>
            <person name="Sucgang R."/>
            <person name="Berriman M."/>
            <person name="Song J."/>
            <person name="Olsen R."/>
            <person name="Szafranski K."/>
            <person name="Xu Q."/>
            <person name="Tunggal B."/>
            <person name="Kummerfeld S."/>
            <person name="Madera M."/>
            <person name="Konfortov B.A."/>
            <person name="Rivero F."/>
            <person name="Bankier A.T."/>
            <person name="Lehmann R."/>
            <person name="Hamlin N."/>
            <person name="Davies R."/>
            <person name="Gaudet P."/>
            <person name="Fey P."/>
            <person name="Pilcher K."/>
            <person name="Chen G."/>
            <person name="Saunders D."/>
            <person name="Sodergren E.J."/>
            <person name="Davis P."/>
            <person name="Kerhornou A."/>
            <person name="Nie X."/>
            <person name="Hall N."/>
            <person name="Anjard C."/>
            <person name="Hemphill L."/>
            <person name="Bason N."/>
            <person name="Farbrother P."/>
            <person name="Desany B."/>
            <person name="Just E."/>
            <person name="Morio T."/>
            <person name="Rost R."/>
            <person name="Churcher C.M."/>
            <person name="Cooper J."/>
            <person name="Haydock S."/>
            <person name="van Driessche N."/>
            <person name="Cronin A."/>
            <person name="Goodhead I."/>
            <person name="Muzny D.M."/>
            <person name="Mourier T."/>
            <person name="Pain A."/>
            <person name="Lu M."/>
            <person name="Harper D."/>
            <person name="Lindsay R."/>
            <person name="Hauser H."/>
            <person name="James K.D."/>
            <person name="Quiles M."/>
            <person name="Madan Babu M."/>
            <person name="Saito T."/>
            <person name="Buchrieser C."/>
            <person name="Wardroper A."/>
            <person name="Felder M."/>
            <person name="Thangavelu M."/>
            <person name="Johnson D."/>
            <person name="Knights A."/>
            <person name="Loulseged H."/>
            <person name="Mungall K.L."/>
            <person name="Oliver K."/>
            <person name="Price C."/>
            <person name="Quail M.A."/>
            <person name="Urushihara H."/>
            <person name="Hernandez J."/>
            <person name="Rabbinowitsch E."/>
            <person name="Steffen D."/>
            <person name="Sanders M."/>
            <person name="Ma J."/>
            <person name="Kohara Y."/>
            <person name="Sharp S."/>
            <person name="Simmonds M.N."/>
            <person name="Spiegler S."/>
            <person name="Tivey A."/>
            <person name="Sugano S."/>
            <person name="White B."/>
            <person name="Walker D."/>
            <person name="Woodward J.R."/>
            <person name="Winckler T."/>
            <person name="Tanaka Y."/>
            <person name="Shaulsky G."/>
            <person name="Schleicher M."/>
            <person name="Weinstock G.M."/>
            <person name="Rosenthal A."/>
            <person name="Cox E.C."/>
            <person name="Chisholm R.L."/>
            <person name="Gibbs R.A."/>
            <person name="Loomis W.F."/>
            <person name="Platzer M."/>
            <person name="Kay R.R."/>
            <person name="Williams J.G."/>
            <person name="Dear P.H."/>
            <person name="Noegel A.A."/>
            <person name="Barrell B.G."/>
            <person name="Kuspa A."/>
        </authorList>
    </citation>
    <scope>NUCLEOTIDE SEQUENCE [LARGE SCALE GENOMIC DNA]</scope>
    <source>
        <strain>AX4</strain>
    </source>
</reference>
<accession>Q54UR0</accession>
<sequence>MIEINNKVDFIFYTNGTPNTYKIKLILLELENSHGITYESKTIDITKKENYSDEFVKINPNKKVPAIVDQTGEKPIIVFESVSILIYLAQKYNTFLPDFKTNPKENSDVITWSVWQAANLGPAFGQFFHFSYFSPTVQEYSLHRFNNEAQRVLRLLDDRLSVSPYIGGNEFSIADIASAGWLLYLNFVPFYNATKERFPNIFKWLDLIGQRDAVKQVNQQISEGFKNFSTAGIRALFTNDPELINAKAPVGIENVVLKYD</sequence>
<name>Y0881_DICDI</name>
<dbReference type="EMBL" id="AAFI02000039">
    <property type="protein sequence ID" value="EAL66982.1"/>
    <property type="molecule type" value="Genomic_DNA"/>
</dbReference>
<dbReference type="RefSeq" id="XP_640961.1">
    <property type="nucleotide sequence ID" value="XM_635869.1"/>
</dbReference>
<dbReference type="SMR" id="Q54UR0"/>
<dbReference type="STRING" id="44689.Q54UR0"/>
<dbReference type="PaxDb" id="44689-DDB0304358"/>
<dbReference type="EnsemblProtists" id="EAL66982">
    <property type="protein sequence ID" value="EAL66982"/>
    <property type="gene ID" value="DDB_G0280881"/>
</dbReference>
<dbReference type="GeneID" id="8622765"/>
<dbReference type="KEGG" id="ddi:DDB_G0280881"/>
<dbReference type="dictyBase" id="DDB_G0280881"/>
<dbReference type="VEuPathDB" id="AmoebaDB:DDB_G0280881"/>
<dbReference type="eggNOG" id="KOG0867">
    <property type="taxonomic scope" value="Eukaryota"/>
</dbReference>
<dbReference type="HOGENOM" id="CLU_011226_14_4_1"/>
<dbReference type="InParanoid" id="Q54UR0"/>
<dbReference type="OMA" id="ITQNTPN"/>
<dbReference type="PhylomeDB" id="Q54UR0"/>
<dbReference type="PRO" id="PR:Q54UR0"/>
<dbReference type="Proteomes" id="UP000002195">
    <property type="component" value="Chromosome 3"/>
</dbReference>
<dbReference type="GO" id="GO:0005737">
    <property type="term" value="C:cytoplasm"/>
    <property type="evidence" value="ECO:0000318"/>
    <property type="project" value="GO_Central"/>
</dbReference>
<dbReference type="GO" id="GO:0004364">
    <property type="term" value="F:glutathione transferase activity"/>
    <property type="evidence" value="ECO:0000318"/>
    <property type="project" value="GO_Central"/>
</dbReference>
<dbReference type="CDD" id="cd03178">
    <property type="entry name" value="GST_C_Ure2p_like"/>
    <property type="match status" value="1"/>
</dbReference>
<dbReference type="CDD" id="cd03048">
    <property type="entry name" value="GST_N_Ure2p_like"/>
    <property type="match status" value="1"/>
</dbReference>
<dbReference type="Gene3D" id="1.20.1050.10">
    <property type="match status" value="1"/>
</dbReference>
<dbReference type="Gene3D" id="3.40.30.10">
    <property type="entry name" value="Glutaredoxin"/>
    <property type="match status" value="1"/>
</dbReference>
<dbReference type="InterPro" id="IPR010987">
    <property type="entry name" value="Glutathione-S-Trfase_C-like"/>
</dbReference>
<dbReference type="InterPro" id="IPR036282">
    <property type="entry name" value="Glutathione-S-Trfase_C_sf"/>
</dbReference>
<dbReference type="InterPro" id="IPR004045">
    <property type="entry name" value="Glutathione_S-Trfase_N"/>
</dbReference>
<dbReference type="InterPro" id="IPR036249">
    <property type="entry name" value="Thioredoxin-like_sf"/>
</dbReference>
<dbReference type="PANTHER" id="PTHR44051">
    <property type="entry name" value="GLUTATHIONE S-TRANSFERASE-RELATED"/>
    <property type="match status" value="1"/>
</dbReference>
<dbReference type="PANTHER" id="PTHR44051:SF16">
    <property type="entry name" value="GLUTATHIONE S-TRANSFERASE-RELATED"/>
    <property type="match status" value="1"/>
</dbReference>
<dbReference type="Pfam" id="PF13410">
    <property type="entry name" value="GST_C_2"/>
    <property type="match status" value="1"/>
</dbReference>
<dbReference type="Pfam" id="PF02798">
    <property type="entry name" value="GST_N"/>
    <property type="match status" value="1"/>
</dbReference>
<dbReference type="SFLD" id="SFLDG01151">
    <property type="entry name" value="Main.2:_Nu-like"/>
    <property type="match status" value="1"/>
</dbReference>
<dbReference type="SFLD" id="SFLDG00358">
    <property type="entry name" value="Main_(cytGST)"/>
    <property type="match status" value="1"/>
</dbReference>
<dbReference type="SUPFAM" id="SSF47616">
    <property type="entry name" value="GST C-terminal domain-like"/>
    <property type="match status" value="1"/>
</dbReference>
<dbReference type="SUPFAM" id="SSF52833">
    <property type="entry name" value="Thioredoxin-like"/>
    <property type="match status" value="1"/>
</dbReference>
<dbReference type="PROSITE" id="PS50405">
    <property type="entry name" value="GST_CTER"/>
    <property type="match status" value="1"/>
</dbReference>
<dbReference type="PROSITE" id="PS50404">
    <property type="entry name" value="GST_NTER"/>
    <property type="match status" value="1"/>
</dbReference>
<gene>
    <name type="ORF">DDB_G0280881</name>
</gene>
<protein>
    <recommendedName>
        <fullName>Glutathione S-transferase domain-containing protein DDB_G0280881</fullName>
    </recommendedName>
</protein>
<evidence type="ECO:0000305" key="1"/>
<feature type="chain" id="PRO_0000363844" description="Glutathione S-transferase domain-containing protein DDB_G0280881">
    <location>
        <begin position="1"/>
        <end position="260"/>
    </location>
</feature>
<feature type="domain" description="GST N-terminal">
    <location>
        <begin position="7"/>
        <end position="96"/>
    </location>
</feature>
<feature type="domain" description="GST C-terminal">
    <location>
        <begin position="102"/>
        <end position="228"/>
    </location>
</feature>
<comment type="similarity">
    <text evidence="1">Belongs to the GST superfamily.</text>
</comment>
<keyword id="KW-1185">Reference proteome</keyword>
<proteinExistence type="inferred from homology"/>